<comment type="function">
    <text evidence="2 9">Variant histone H2A which replaces conventional H2A in a subset of nucleosomes where it represses transcription (By similarity). Nucleosomes wrap and compact DNA into chromatin, limiting DNA accessibility to the cellular machineries which require DNA as a template (By similarity). Histones thereby play a central role in transcription regulation, DNA repair, DNA replication and chromosomal stability (By similarity). DNA accessibility is regulated via a complex set of post-translational modifications of histones, also called histone code, and nucleosome remodeling (By similarity). Involved in stable X chromosome inactivation (By similarity). Inhibits the binding of transcription factors, including NF-kappa-B, and interferes with the activity of remodeling SWI/SNF complexes (By similarity). Inhibits histone acetylation by EP300 and recruits class I HDACs, which induces a hypoacetylated state of chromatin (PubMed:16107708).</text>
</comment>
<comment type="function">
    <molecule>Isoform 1</molecule>
    <text evidence="10 11 12">Isoform that specifically binds poly-ADP-ribose and O-acetyl-ADP-ribose and plays a key role in NAD(+) metabolism (PubMed:28991266, PubMed:34887560). Able to bind to the ends of poly-ADP-ribose chains created by PARP1 and cap them (PubMed:28991266). This prevents PARP1 from further addition of ADP-ribose and thus limits the consumption of nuclear NAD(+), allowing the cell to maintain proper NAD(+) levels in both the nucleus and the mitochondria to promote proper mitochondrial respiration (PubMed:28991266). Increases the expression of genes involved in redox metabolism, including SOD3 (PubMed:23022728).</text>
</comment>
<comment type="function">
    <molecule>Isoform 2</molecule>
    <text evidence="2 10">In contrast to isoform 1, does not bind poly-ADP-ribose (By similarity). Represses SOD3 gene expression (PubMed:23022728).</text>
</comment>
<comment type="subunit">
    <text evidence="2">The nucleosome is a histone octamer containing two molecules each of H2A, H2B, H3 and H4 assembled in one H3-H4 heterotetramer and two H2A-H2B heterodimers. Interacts with HDAC1 and HDAC2. Interacts with SPOP. Part of a complex consisting of MACROH2A1, CUL3 and SPOP.</text>
</comment>
<comment type="subunit">
    <molecule>Isoform 1</molecule>
    <text evidence="11">Interacts with PARP1.</text>
</comment>
<comment type="subcellular location">
    <subcellularLocation>
        <location evidence="8 13">Nucleus</location>
    </subcellularLocation>
    <subcellularLocation>
        <location evidence="8 13">Chromosome</location>
    </subcellularLocation>
    <text evidence="2 8 13">Enriched in inactive X chromosome chromatin and in senescence-associated heterochromatin (PubMed:9634239). In quiescent lymphocytes, associated with centromeric constitutive heterochromatin (PubMed:15564378). Recruited to DNA damage sites in an APLF-dependent manner (By similarity).</text>
</comment>
<comment type="alternative products">
    <event type="alternative splicing"/>
    <isoform>
        <id>Q9QZQ8-2</id>
        <name>1</name>
        <name evidence="14">mH2A1.1</name>
        <name evidence="15">macroH2A1.1</name>
        <sequence type="displayed"/>
    </isoform>
    <isoform>
        <id>Q9QZQ8-1</id>
        <name>2</name>
        <name evidence="14">mH2A1.2</name>
        <name evidence="15">macroH2A1.2</name>
        <sequence type="described" ref="VSP_061611"/>
    </isoform>
</comment>
<comment type="tissue specificity">
    <text evidence="6 7">Widely expressed, with high levels in testis. Present in liver, kidney and adrenal gland (at protein level). In the liver, present in hepatocytes and at a lesser extent in cells of the bile ducts. In the kidney, expressed in proximal and distal convoluted tubules and in straight proximal tubules. In the adrenal gland, present in inner cells of the cortex and medulla.</text>
</comment>
<comment type="domain">
    <molecule>Isoform 1</molecule>
    <text evidence="11 12">The macro domain specifically binds poly-ADP-ribose (PubMed:28991266, PubMed:34887560). Binds poly-ADP-ribose with lower affinity compared to premetazoan macroH2A1.1 ortholog (PubMed:34887560).</text>
</comment>
<comment type="PTM">
    <text evidence="2">Monoubiquitinated at either Lys-116 or Lys-117. May also be polyubiquitinated. Ubiquitination is mediated by the CUL3/SPOP E3 complex and does not promote proteasomal degradation. Instead, it is required for enrichment in inactive X chromosome chromatin.</text>
</comment>
<comment type="miscellaneous">
    <molecule>Isoform 2</molecule>
    <text evidence="10">Major form. The preferential expression of isoform 2 over that of isoform 1 requires the presence of DDX5/DDX17.</text>
</comment>
<comment type="miscellaneous">
    <molecule>Isoform 1</molecule>
    <text evidence="10">Preferentially expressed over isoform 2 in the absence of DDX5/DDX17.</text>
</comment>
<comment type="similarity">
    <text evidence="16">Belongs to the histone H2A family.</text>
</comment>
<feature type="chain" id="PRO_0000227904" description="Core histone macro-H2A.1">
    <location>
        <begin position="1"/>
        <end position="369"/>
    </location>
</feature>
<feature type="domain" description="Histone H2A">
    <location>
        <begin position="2"/>
        <end position="117"/>
    </location>
</feature>
<feature type="domain" description="Macro" evidence="4">
    <location>
        <begin position="184"/>
        <end position="367"/>
    </location>
</feature>
<feature type="region of interest" description="Disordered" evidence="5">
    <location>
        <begin position="128"/>
        <end position="180"/>
    </location>
</feature>
<feature type="compositionally biased region" description="Basic residues" evidence="5">
    <location>
        <begin position="144"/>
        <end position="160"/>
    </location>
</feature>
<feature type="binding site" evidence="1">
    <location>
        <position position="203"/>
    </location>
    <ligand>
        <name>a glycoprotein</name>
        <dbReference type="ChEBI" id="CHEBI:17089"/>
    </ligand>
    <ligandPart>
        <name>poly[(1''-&gt;2')-ADP-alpha-D-ribose] group</name>
        <dbReference type="ChEBI" id="CHEBI:157741"/>
    </ligandPart>
</feature>
<feature type="binding site" evidence="1">
    <location>
        <position position="204"/>
    </location>
    <ligand>
        <name>a glycoprotein</name>
        <dbReference type="ChEBI" id="CHEBI:17089"/>
    </ligand>
    <ligandPart>
        <name>poly[(1''-&gt;2')-ADP-alpha-D-ribose] group</name>
        <dbReference type="ChEBI" id="CHEBI:157741"/>
    </ligandPart>
</feature>
<feature type="binding site" evidence="1">
    <location>
        <position position="226"/>
    </location>
    <ligand>
        <name>a glycoprotein</name>
        <dbReference type="ChEBI" id="CHEBI:17089"/>
    </ligand>
    <ligandPart>
        <name>poly[(1''-&gt;2')-ADP-alpha-D-ribose] group</name>
        <dbReference type="ChEBI" id="CHEBI:157741"/>
    </ligandPart>
</feature>
<feature type="binding site" evidence="1">
    <location>
        <position position="275"/>
    </location>
    <ligand>
        <name>a glycoprotein</name>
        <dbReference type="ChEBI" id="CHEBI:17089"/>
    </ligand>
    <ligandPart>
        <name>poly[(1''-&gt;2')-ADP-alpha-D-ribose] group</name>
        <dbReference type="ChEBI" id="CHEBI:157741"/>
    </ligandPart>
</feature>
<feature type="binding site" evidence="1">
    <location>
        <position position="312"/>
    </location>
    <ligand>
        <name>a glycoprotein</name>
        <dbReference type="ChEBI" id="CHEBI:17089"/>
    </ligand>
    <ligandPart>
        <name>poly[(1''-&gt;2')-ADP-alpha-D-ribose] group</name>
        <dbReference type="ChEBI" id="CHEBI:157741"/>
    </ligandPart>
</feature>
<feature type="binding site" evidence="1">
    <location>
        <position position="313"/>
    </location>
    <ligand>
        <name>a glycoprotein</name>
        <dbReference type="ChEBI" id="CHEBI:17089"/>
    </ligand>
    <ligandPart>
        <name>poly[(1''-&gt;2')-ADP-alpha-D-ribose] group</name>
        <dbReference type="ChEBI" id="CHEBI:157741"/>
    </ligandPart>
</feature>
<feature type="binding site" evidence="1">
    <location>
        <position position="314"/>
    </location>
    <ligand>
        <name>a glycoprotein</name>
        <dbReference type="ChEBI" id="CHEBI:17089"/>
    </ligand>
    <ligandPart>
        <name>poly[(1''-&gt;2')-ADP-alpha-D-ribose] group</name>
        <dbReference type="ChEBI" id="CHEBI:157741"/>
    </ligandPart>
</feature>
<feature type="binding site" evidence="1">
    <location>
        <position position="316"/>
    </location>
    <ligand>
        <name>a glycoprotein</name>
        <dbReference type="ChEBI" id="CHEBI:17089"/>
    </ligand>
    <ligandPart>
        <name>poly[(1''-&gt;2')-ADP-alpha-D-ribose] group</name>
        <dbReference type="ChEBI" id="CHEBI:157741"/>
    </ligandPart>
</feature>
<feature type="modified residue" description="N6-lactoyllysine; alternate" evidence="3">
    <location>
        <position position="7"/>
    </location>
</feature>
<feature type="modified residue" description="N6-lactoyllysine; alternate" evidence="3">
    <location>
        <position position="9"/>
    </location>
</feature>
<feature type="modified residue" description="N6-methyllysine" evidence="2">
    <location>
        <position position="18"/>
    </location>
</feature>
<feature type="modified residue" description="N6-acetyllysine; alternate" evidence="20">
    <location>
        <position position="116"/>
    </location>
</feature>
<feature type="modified residue" description="N6,N6-dimethyllysine; alternate" evidence="2">
    <location>
        <position position="123"/>
    </location>
</feature>
<feature type="modified residue" description="N6-acetyllysine; alternate" evidence="20">
    <location>
        <position position="123"/>
    </location>
</feature>
<feature type="modified residue" description="Phosphothreonine" evidence="18 19">
    <location>
        <position position="129"/>
    </location>
</feature>
<feature type="modified residue" description="Phosphoserine" evidence="19">
    <location>
        <position position="170"/>
    </location>
</feature>
<feature type="modified residue" description="Phosphoserine" evidence="19">
    <location>
        <position position="173"/>
    </location>
</feature>
<feature type="modified residue" description="Phosphothreonine" evidence="19">
    <location>
        <position position="178"/>
    </location>
</feature>
<feature type="cross-link" description="Glycyl lysine isopeptide (Lys-Gly) (interchain with G-Cter in ubiquitin); alternate" evidence="2">
    <location>
        <position position="116"/>
    </location>
</feature>
<feature type="cross-link" description="Glycyl lysine isopeptide (Lys-Gly) (interchain with G-Cter in ubiquitin)" evidence="2">
    <location>
        <position position="117"/>
    </location>
</feature>
<feature type="cross-link" description="Glycyl lysine isopeptide (Lys-Gly) (interchain with G-Cter in SUMO2); alternate" evidence="2">
    <location>
        <position position="123"/>
    </location>
</feature>
<feature type="cross-link" description="Glycyl lysine isopeptide (Lys-Gly) (interchain with G-Cter in SUMO2)" evidence="2">
    <location>
        <position position="167"/>
    </location>
</feature>
<feature type="cross-link" description="Glycyl lysine isopeptide (Lys-Gly) (interchain with G-Cter in SUMO2)" evidence="2">
    <location>
        <position position="189"/>
    </location>
</feature>
<feature type="cross-link" description="Glycyl lysine isopeptide (Lys-Gly) (interchain with G-Cter in SUMO2)" evidence="2">
    <location>
        <position position="320"/>
    </location>
</feature>
<feature type="splice variant" id="VSP_061611" description="In isoform 2.">
    <original>QVVQADIASIDSDAVVHPTNTDFYTGGEV</original>
    <variation>NLIHSEISNLAGFEVEAIINPTNADIDLKDDL</variation>
    <location>
        <begin position="198"/>
        <end position="226"/>
    </location>
</feature>
<feature type="mutagenesis site" description="Abolished ability to bind poly-ADP-ribose and inhibit PARP1." evidence="11">
    <original>G</original>
    <variation>E</variation>
    <location>
        <position position="224"/>
    </location>
</feature>
<dbReference type="EMBL" id="AF171080">
    <property type="protein sequence ID" value="AAD53745.1"/>
    <property type="molecule type" value="mRNA"/>
</dbReference>
<dbReference type="EMBL" id="AF171081">
    <property type="protein sequence ID" value="AAD53746.1"/>
    <property type="molecule type" value="mRNA"/>
</dbReference>
<dbReference type="EMBL" id="AB071988">
    <property type="protein sequence ID" value="BAB68541.1"/>
    <property type="molecule type" value="mRNA"/>
</dbReference>
<dbReference type="EMBL" id="BC006955">
    <property type="protein sequence ID" value="AAH06955.1"/>
    <property type="molecule type" value="mRNA"/>
</dbReference>
<dbReference type="CCDS" id="CCDS26557.1">
    <molecule id="Q9QZQ8-1"/>
</dbReference>
<dbReference type="CCDS" id="CCDS49278.1">
    <molecule id="Q9QZQ8-2"/>
</dbReference>
<dbReference type="RefSeq" id="NP_001152985.1">
    <property type="nucleotide sequence ID" value="NM_001159513.1"/>
</dbReference>
<dbReference type="RefSeq" id="NP_001152986.1">
    <molecule id="Q9QZQ8-2"/>
    <property type="nucleotide sequence ID" value="NM_001159514.1"/>
</dbReference>
<dbReference type="RefSeq" id="NP_001152987.1">
    <property type="nucleotide sequence ID" value="NM_001159515.1"/>
</dbReference>
<dbReference type="RefSeq" id="NP_036145.1">
    <molecule id="Q9QZQ8-1"/>
    <property type="nucleotide sequence ID" value="NM_012015.2"/>
</dbReference>
<dbReference type="SMR" id="Q9QZQ8"/>
<dbReference type="BioGRID" id="205061">
    <property type="interactions" value="14"/>
</dbReference>
<dbReference type="FunCoup" id="Q9QZQ8">
    <property type="interactions" value="2289"/>
</dbReference>
<dbReference type="IntAct" id="Q9QZQ8">
    <property type="interactions" value="8"/>
</dbReference>
<dbReference type="MINT" id="Q9QZQ8"/>
<dbReference type="STRING" id="10090.ENSMUSP00000016081"/>
<dbReference type="GlyGen" id="Q9QZQ8">
    <property type="glycosylation" value="1 site, 1 O-linked glycan (1 site)"/>
</dbReference>
<dbReference type="iPTMnet" id="Q9QZQ8"/>
<dbReference type="PhosphoSitePlus" id="Q9QZQ8"/>
<dbReference type="SwissPalm" id="Q9QZQ8"/>
<dbReference type="jPOST" id="Q9QZQ8"/>
<dbReference type="PaxDb" id="10090-ENSMUSP00000016081"/>
<dbReference type="PeptideAtlas" id="Q9QZQ8"/>
<dbReference type="ProteomicsDB" id="270915">
    <molecule id="Q9QZQ8-1"/>
</dbReference>
<dbReference type="ProteomicsDB" id="270916">
    <molecule id="Q9QZQ8-2"/>
</dbReference>
<dbReference type="Pumba" id="Q9QZQ8"/>
<dbReference type="Antibodypedia" id="26391">
    <property type="antibodies" value="222 antibodies from 31 providers"/>
</dbReference>
<dbReference type="DNASU" id="26914"/>
<dbReference type="Ensembl" id="ENSMUST00000016081.13">
    <molecule id="Q9QZQ8-1"/>
    <property type="protein sequence ID" value="ENSMUSP00000016081.7"/>
    <property type="gene ID" value="ENSMUSG00000015937.16"/>
</dbReference>
<dbReference type="Ensembl" id="ENSMUST00000045788.9">
    <molecule id="Q9QZQ8-2"/>
    <property type="protein sequence ID" value="ENSMUSP00000038221.8"/>
    <property type="gene ID" value="ENSMUSG00000015937.16"/>
</dbReference>
<dbReference type="GeneID" id="26914"/>
<dbReference type="KEGG" id="mmu:26914"/>
<dbReference type="UCSC" id="uc007qsf.2">
    <molecule id="Q9QZQ8-2"/>
    <property type="organism name" value="mouse"/>
</dbReference>
<dbReference type="UCSC" id="uc007qsg.2">
    <molecule id="Q9QZQ8-2"/>
    <property type="organism name" value="mouse"/>
</dbReference>
<dbReference type="AGR" id="MGI:1349392"/>
<dbReference type="CTD" id="9555"/>
<dbReference type="MGI" id="MGI:1349392">
    <property type="gene designation" value="Macroh2a1"/>
</dbReference>
<dbReference type="VEuPathDB" id="HostDB:ENSMUSG00000015937"/>
<dbReference type="eggNOG" id="KOG1756">
    <property type="taxonomic scope" value="Eukaryota"/>
</dbReference>
<dbReference type="eggNOG" id="KOG2633">
    <property type="taxonomic scope" value="Eukaryota"/>
</dbReference>
<dbReference type="GeneTree" id="ENSGT00940000159541"/>
<dbReference type="HOGENOM" id="CLU_062828_0_0_1"/>
<dbReference type="InParanoid" id="Q9QZQ8"/>
<dbReference type="OMA" id="GHHFPAK"/>
<dbReference type="OrthoDB" id="64476at9989"/>
<dbReference type="PhylomeDB" id="Q9QZQ8"/>
<dbReference type="TreeFam" id="TF332276"/>
<dbReference type="BioGRID-ORCS" id="26914">
    <property type="hits" value="1 hit in 81 CRISPR screens"/>
</dbReference>
<dbReference type="ChiTaRS" id="H2afy">
    <property type="organism name" value="mouse"/>
</dbReference>
<dbReference type="PRO" id="PR:Q9QZQ8"/>
<dbReference type="Proteomes" id="UP000000589">
    <property type="component" value="Chromosome 13"/>
</dbReference>
<dbReference type="RNAct" id="Q9QZQ8">
    <property type="molecule type" value="protein"/>
</dbReference>
<dbReference type="Bgee" id="ENSMUSG00000015937">
    <property type="expression patterns" value="Expressed in saccule of membranous labyrinth and 283 other cell types or tissues"/>
</dbReference>
<dbReference type="GO" id="GO:0001740">
    <property type="term" value="C:Barr body"/>
    <property type="evidence" value="ECO:0000266"/>
    <property type="project" value="MGI"/>
</dbReference>
<dbReference type="GO" id="GO:0005813">
    <property type="term" value="C:centrosome"/>
    <property type="evidence" value="ECO:0000304"/>
    <property type="project" value="MGI"/>
</dbReference>
<dbReference type="GO" id="GO:0000793">
    <property type="term" value="C:condensed chromosome"/>
    <property type="evidence" value="ECO:0000314"/>
    <property type="project" value="MGI"/>
</dbReference>
<dbReference type="GO" id="GO:0005730">
    <property type="term" value="C:nucleolus"/>
    <property type="evidence" value="ECO:0007669"/>
    <property type="project" value="Ensembl"/>
</dbReference>
<dbReference type="GO" id="GO:0005654">
    <property type="term" value="C:nucleoplasm"/>
    <property type="evidence" value="ECO:0007669"/>
    <property type="project" value="Ensembl"/>
</dbReference>
<dbReference type="GO" id="GO:0000786">
    <property type="term" value="C:nucleosome"/>
    <property type="evidence" value="ECO:0007669"/>
    <property type="project" value="UniProtKB-KW"/>
</dbReference>
<dbReference type="GO" id="GO:0005634">
    <property type="term" value="C:nucleus"/>
    <property type="evidence" value="ECO:0000314"/>
    <property type="project" value="UniProtKB"/>
</dbReference>
<dbReference type="GO" id="GO:0005721">
    <property type="term" value="C:pericentric heterochromatin"/>
    <property type="evidence" value="ECO:0007669"/>
    <property type="project" value="Ensembl"/>
</dbReference>
<dbReference type="GO" id="GO:0090734">
    <property type="term" value="C:site of DNA damage"/>
    <property type="evidence" value="ECO:0007669"/>
    <property type="project" value="Ensembl"/>
</dbReference>
<dbReference type="GO" id="GO:0072570">
    <property type="term" value="F:ADP-D-ribose binding"/>
    <property type="evidence" value="ECO:0000314"/>
    <property type="project" value="UniProtKB"/>
</dbReference>
<dbReference type="GO" id="GO:0160002">
    <property type="term" value="F:ADP-D-ribose modification-dependent protein binding"/>
    <property type="evidence" value="ECO:0000314"/>
    <property type="project" value="UniProtKB"/>
</dbReference>
<dbReference type="GO" id="GO:0003682">
    <property type="term" value="F:chromatin binding"/>
    <property type="evidence" value="ECO:0000314"/>
    <property type="project" value="MGI"/>
</dbReference>
<dbReference type="GO" id="GO:0010385">
    <property type="term" value="F:double-stranded methylated DNA binding"/>
    <property type="evidence" value="ECO:0007669"/>
    <property type="project" value="Ensembl"/>
</dbReference>
<dbReference type="GO" id="GO:0031492">
    <property type="term" value="F:nucleosomal DNA binding"/>
    <property type="evidence" value="ECO:0000314"/>
    <property type="project" value="UniProtKB"/>
</dbReference>
<dbReference type="GO" id="GO:1990841">
    <property type="term" value="F:promoter-specific chromatin binding"/>
    <property type="evidence" value="ECO:0000314"/>
    <property type="project" value="UniProtKB"/>
</dbReference>
<dbReference type="GO" id="GO:0046982">
    <property type="term" value="F:protein heterodimerization activity"/>
    <property type="evidence" value="ECO:0007669"/>
    <property type="project" value="InterPro"/>
</dbReference>
<dbReference type="GO" id="GO:0019901">
    <property type="term" value="F:protein kinase binding"/>
    <property type="evidence" value="ECO:0007669"/>
    <property type="project" value="Ensembl"/>
</dbReference>
<dbReference type="GO" id="GO:0030291">
    <property type="term" value="F:protein serine/threonine kinase inhibitor activity"/>
    <property type="evidence" value="ECO:0007669"/>
    <property type="project" value="Ensembl"/>
</dbReference>
<dbReference type="GO" id="GO:0000182">
    <property type="term" value="F:rDNA binding"/>
    <property type="evidence" value="ECO:0007669"/>
    <property type="project" value="Ensembl"/>
</dbReference>
<dbReference type="GO" id="GO:0000977">
    <property type="term" value="F:RNA polymerase II transcription regulatory region sequence-specific DNA binding"/>
    <property type="evidence" value="ECO:0007669"/>
    <property type="project" value="Ensembl"/>
</dbReference>
<dbReference type="GO" id="GO:0030527">
    <property type="term" value="F:structural constituent of chromatin"/>
    <property type="evidence" value="ECO:0007669"/>
    <property type="project" value="Ensembl"/>
</dbReference>
<dbReference type="GO" id="GO:0006281">
    <property type="term" value="P:DNA repair"/>
    <property type="evidence" value="ECO:0007669"/>
    <property type="project" value="Ensembl"/>
</dbReference>
<dbReference type="GO" id="GO:0071169">
    <property type="term" value="P:establishment of protein localization to chromatin"/>
    <property type="evidence" value="ECO:0007669"/>
    <property type="project" value="Ensembl"/>
</dbReference>
<dbReference type="GO" id="GO:1902750">
    <property type="term" value="P:negative regulation of cell cycle G2/M phase transition"/>
    <property type="evidence" value="ECO:0007669"/>
    <property type="project" value="Ensembl"/>
</dbReference>
<dbReference type="GO" id="GO:0045814">
    <property type="term" value="P:negative regulation of gene expression, epigenetic"/>
    <property type="evidence" value="ECO:0007669"/>
    <property type="project" value="Ensembl"/>
</dbReference>
<dbReference type="GO" id="GO:1904815">
    <property type="term" value="P:negative regulation of protein localization to chromosome, telomeric region"/>
    <property type="evidence" value="ECO:0007669"/>
    <property type="project" value="Ensembl"/>
</dbReference>
<dbReference type="GO" id="GO:1902883">
    <property type="term" value="P:negative regulation of response to oxidative stress"/>
    <property type="evidence" value="ECO:0000315"/>
    <property type="project" value="UniProtKB"/>
</dbReference>
<dbReference type="GO" id="GO:0000122">
    <property type="term" value="P:negative regulation of transcription by RNA polymerase II"/>
    <property type="evidence" value="ECO:0000316"/>
    <property type="project" value="MGI"/>
</dbReference>
<dbReference type="GO" id="GO:1901837">
    <property type="term" value="P:negative regulation of transcription of nucleolar large rRNA by RNA polymerase I"/>
    <property type="evidence" value="ECO:0000315"/>
    <property type="project" value="UniProtKB"/>
</dbReference>
<dbReference type="GO" id="GO:0006334">
    <property type="term" value="P:nucleosome assembly"/>
    <property type="evidence" value="ECO:0007669"/>
    <property type="project" value="InterPro"/>
</dbReference>
<dbReference type="GO" id="GO:1903226">
    <property type="term" value="P:positive regulation of endodermal cell differentiation"/>
    <property type="evidence" value="ECO:0007669"/>
    <property type="project" value="Ensembl"/>
</dbReference>
<dbReference type="GO" id="GO:0045618">
    <property type="term" value="P:positive regulation of keratinocyte differentiation"/>
    <property type="evidence" value="ECO:0007669"/>
    <property type="project" value="Ensembl"/>
</dbReference>
<dbReference type="GO" id="GO:0034184">
    <property type="term" value="P:positive regulation of maintenance of mitotic sister chromatid cohesion"/>
    <property type="evidence" value="ECO:0007669"/>
    <property type="project" value="Ensembl"/>
</dbReference>
<dbReference type="GO" id="GO:1902884">
    <property type="term" value="P:positive regulation of response to oxidative stress"/>
    <property type="evidence" value="ECO:0000315"/>
    <property type="project" value="UniProtKB"/>
</dbReference>
<dbReference type="GO" id="GO:0019216">
    <property type="term" value="P:regulation of lipid metabolic process"/>
    <property type="evidence" value="ECO:0000314"/>
    <property type="project" value="MGI"/>
</dbReference>
<dbReference type="GO" id="GO:1902688">
    <property type="term" value="P:regulation of NAD metabolic process"/>
    <property type="evidence" value="ECO:0000314"/>
    <property type="project" value="UniProtKB"/>
</dbReference>
<dbReference type="GO" id="GO:0002082">
    <property type="term" value="P:regulation of oxidative phosphorylation"/>
    <property type="evidence" value="ECO:0000314"/>
    <property type="project" value="UniProt"/>
</dbReference>
<dbReference type="GO" id="GO:1902882">
    <property type="term" value="P:regulation of response to oxidative stress"/>
    <property type="evidence" value="ECO:0000315"/>
    <property type="project" value="UniProtKB"/>
</dbReference>
<dbReference type="GO" id="GO:0007549">
    <property type="term" value="P:sex-chromosome dosage compensation"/>
    <property type="evidence" value="ECO:0000266"/>
    <property type="project" value="MGI"/>
</dbReference>
<dbReference type="GO" id="GO:0045815">
    <property type="term" value="P:transcription initiation-coupled chromatin remodeling"/>
    <property type="evidence" value="ECO:0007669"/>
    <property type="project" value="Ensembl"/>
</dbReference>
<dbReference type="CDD" id="cd00074">
    <property type="entry name" value="HFD_H2A"/>
    <property type="match status" value="1"/>
</dbReference>
<dbReference type="CDD" id="cd02904">
    <property type="entry name" value="Macro_H2A-like"/>
    <property type="match status" value="1"/>
</dbReference>
<dbReference type="FunFam" id="1.10.20.10:FF:000013">
    <property type="entry name" value="Core histone macro-H2A"/>
    <property type="match status" value="1"/>
</dbReference>
<dbReference type="FunFam" id="3.40.220.10:FF:000002">
    <property type="entry name" value="Core histone macro-H2A"/>
    <property type="match status" value="1"/>
</dbReference>
<dbReference type="Gene3D" id="1.10.20.10">
    <property type="entry name" value="Histone, subunit A"/>
    <property type="match status" value="1"/>
</dbReference>
<dbReference type="Gene3D" id="3.40.220.10">
    <property type="entry name" value="Leucine Aminopeptidase, subunit E, domain 1"/>
    <property type="match status" value="1"/>
</dbReference>
<dbReference type="InterPro" id="IPR021171">
    <property type="entry name" value="Core_histone_macro-H2A"/>
</dbReference>
<dbReference type="InterPro" id="IPR009072">
    <property type="entry name" value="Histone-fold"/>
</dbReference>
<dbReference type="InterPro" id="IPR002119">
    <property type="entry name" value="Histone_H2A"/>
</dbReference>
<dbReference type="InterPro" id="IPR007125">
    <property type="entry name" value="Histone_H2A/H2B/H3"/>
</dbReference>
<dbReference type="InterPro" id="IPR032454">
    <property type="entry name" value="Histone_H2A_C"/>
</dbReference>
<dbReference type="InterPro" id="IPR002589">
    <property type="entry name" value="Macro_dom"/>
</dbReference>
<dbReference type="InterPro" id="IPR043472">
    <property type="entry name" value="Macro_dom-like"/>
</dbReference>
<dbReference type="InterPro" id="IPR035796">
    <property type="entry name" value="Macro_H2A"/>
</dbReference>
<dbReference type="PANTHER" id="PTHR23430">
    <property type="entry name" value="HISTONE H2A"/>
    <property type="match status" value="1"/>
</dbReference>
<dbReference type="Pfam" id="PF00125">
    <property type="entry name" value="Histone"/>
    <property type="match status" value="1"/>
</dbReference>
<dbReference type="Pfam" id="PF16211">
    <property type="entry name" value="Histone_H2A_C"/>
    <property type="match status" value="1"/>
</dbReference>
<dbReference type="Pfam" id="PF01661">
    <property type="entry name" value="Macro"/>
    <property type="match status" value="1"/>
</dbReference>
<dbReference type="PIRSF" id="PIRSF037942">
    <property type="entry name" value="Core_histone_macro-H2A"/>
    <property type="match status" value="1"/>
</dbReference>
<dbReference type="PRINTS" id="PR00620">
    <property type="entry name" value="HISTONEH2A"/>
</dbReference>
<dbReference type="SMART" id="SM00506">
    <property type="entry name" value="A1pp"/>
    <property type="match status" value="1"/>
</dbReference>
<dbReference type="SMART" id="SM00414">
    <property type="entry name" value="H2A"/>
    <property type="match status" value="1"/>
</dbReference>
<dbReference type="SUPFAM" id="SSF47113">
    <property type="entry name" value="Histone-fold"/>
    <property type="match status" value="1"/>
</dbReference>
<dbReference type="SUPFAM" id="SSF52949">
    <property type="entry name" value="Macro domain-like"/>
    <property type="match status" value="1"/>
</dbReference>
<dbReference type="PROSITE" id="PS51154">
    <property type="entry name" value="MACRO"/>
    <property type="match status" value="1"/>
</dbReference>
<organism>
    <name type="scientific">Mus musculus</name>
    <name type="common">Mouse</name>
    <dbReference type="NCBI Taxonomy" id="10090"/>
    <lineage>
        <taxon>Eukaryota</taxon>
        <taxon>Metazoa</taxon>
        <taxon>Chordata</taxon>
        <taxon>Craniata</taxon>
        <taxon>Vertebrata</taxon>
        <taxon>Euteleostomi</taxon>
        <taxon>Mammalia</taxon>
        <taxon>Eutheria</taxon>
        <taxon>Euarchontoglires</taxon>
        <taxon>Glires</taxon>
        <taxon>Rodentia</taxon>
        <taxon>Myomorpha</taxon>
        <taxon>Muroidea</taxon>
        <taxon>Muridae</taxon>
        <taxon>Murinae</taxon>
        <taxon>Mus</taxon>
        <taxon>Mus</taxon>
    </lineage>
</organism>
<sequence length="369" mass="39290">MSSRGGKKKSTKTSRSAKAGVIFPVGRMLRYIKKGHPKYRIGVGAPVYMAAVLEYLTAEILELAGNAARDNKKGRVTPRHILLAVANDEELNQLLKGVTIASGGVLPNIHPELLAKKRGSKGKLEAIITPPPAKKAKSPSQKKPVAKKTGGKKGARKSKKKQGEVSKAASADSTTEGTPTDGFTVLSTKSLFLGQKLQVVQADIASIDSDAVVHPTNTDFYTGGEVGNTLEKKGGKEFVEAVLELRKKNGPLEVAGAAISAGHGLPAKFVIHCNSPVWGADKCEELLEKTVKNCLALADDRKLKSIAFPSIGSGRNGFPKQTAAQLILKAISSYFVSTMSSSIKTVYFMLFDSESIGIYVQEMAKLDAN</sequence>
<name>H2AY_MOUSE</name>
<accession>Q9QZQ8</accession>
<accession>Q91VZ2</accession>
<accession>Q9QZQ7</accession>
<proteinExistence type="evidence at protein level"/>
<protein>
    <recommendedName>
        <fullName>Core histone macro-H2A.1</fullName>
        <shortName>Histone macroH2A1</shortName>
        <shortName>mH2A1</shortName>
    </recommendedName>
    <alternativeName>
        <fullName>H2A.y</fullName>
    </alternativeName>
    <alternativeName>
        <fullName>H2A/y</fullName>
    </alternativeName>
</protein>
<gene>
    <name evidence="17" type="primary">Macroh2a1</name>
    <name evidence="17" type="synonym">H2afy</name>
</gene>
<evidence type="ECO:0000250" key="1">
    <source>
        <dbReference type="UniProtKB" id="A0A0D2UG83"/>
    </source>
</evidence>
<evidence type="ECO:0000250" key="2">
    <source>
        <dbReference type="UniProtKB" id="O75367"/>
    </source>
</evidence>
<evidence type="ECO:0000250" key="3">
    <source>
        <dbReference type="UniProtKB" id="P0C0S5"/>
    </source>
</evidence>
<evidence type="ECO:0000255" key="4">
    <source>
        <dbReference type="PROSITE-ProRule" id="PRU00490"/>
    </source>
</evidence>
<evidence type="ECO:0000256" key="5">
    <source>
        <dbReference type="SAM" id="MobiDB-lite"/>
    </source>
</evidence>
<evidence type="ECO:0000269" key="6">
    <source>
    </source>
</evidence>
<evidence type="ECO:0000269" key="7">
    <source>
    </source>
</evidence>
<evidence type="ECO:0000269" key="8">
    <source>
    </source>
</evidence>
<evidence type="ECO:0000269" key="9">
    <source>
    </source>
</evidence>
<evidence type="ECO:0000269" key="10">
    <source>
    </source>
</evidence>
<evidence type="ECO:0000269" key="11">
    <source>
    </source>
</evidence>
<evidence type="ECO:0000269" key="12">
    <source>
    </source>
</evidence>
<evidence type="ECO:0000269" key="13">
    <source>
    </source>
</evidence>
<evidence type="ECO:0000303" key="14">
    <source>
    </source>
</evidence>
<evidence type="ECO:0000303" key="15">
    <source>
    </source>
</evidence>
<evidence type="ECO:0000305" key="16"/>
<evidence type="ECO:0000312" key="17">
    <source>
        <dbReference type="MGI" id="MGI:1349392"/>
    </source>
</evidence>
<evidence type="ECO:0007744" key="18">
    <source>
    </source>
</evidence>
<evidence type="ECO:0007744" key="19">
    <source>
    </source>
</evidence>
<evidence type="ECO:0007744" key="20">
    <source>
    </source>
</evidence>
<keyword id="KW-0007">Acetylation</keyword>
<keyword id="KW-0025">Alternative splicing</keyword>
<keyword id="KW-0156">Chromatin regulator</keyword>
<keyword id="KW-0158">Chromosome</keyword>
<keyword id="KW-0238">DNA-binding</keyword>
<keyword id="KW-1017">Isopeptide bond</keyword>
<keyword id="KW-0488">Methylation</keyword>
<keyword id="KW-0544">Nucleosome core</keyword>
<keyword id="KW-0539">Nucleus</keyword>
<keyword id="KW-0597">Phosphoprotein</keyword>
<keyword id="KW-1185">Reference proteome</keyword>
<keyword id="KW-0832">Ubl conjugation</keyword>
<reference key="1">
    <citation type="journal article" date="1999" name="Nucleic Acids Res.">
        <title>Messenger RNAs encoding mouse histone macroH2A1 isoforms are expressed at similar levels in male and female cells and result from alternative splicing.</title>
        <authorList>
            <person name="Rasmussen T.P."/>
            <person name="Huang T."/>
            <person name="Mastrangelo M.-A."/>
            <person name="Loring J."/>
            <person name="Panning B."/>
            <person name="Jaenisch R."/>
        </authorList>
    </citation>
    <scope>NUCLEOTIDE SEQUENCE [MRNA] (ISOFORM 2)</scope>
    <scope>NUCLEOTIDE SEQUENCE [MRNA] OF 197-229 (ISOFORM 1)</scope>
    <scope>TISSUE SPECIFICITY</scope>
    <source>
        <strain>129/SvEvTacfBr</strain>
    </source>
</reference>
<reference key="2">
    <citation type="journal article" date="2002" name="Biochim. Biophys. Acta">
        <title>MacroH2A1.2 binds the nuclear protein Spop.</title>
        <authorList>
            <person name="Takahashi I."/>
            <person name="Kameoka Y."/>
            <person name="Hashimoto K."/>
        </authorList>
    </citation>
    <scope>NUCLEOTIDE SEQUENCE [MRNA] (ISOFORM 2)</scope>
    <scope>INTERACTION WITH SPOP</scope>
    <source>
        <tissue>Brain</tissue>
    </source>
</reference>
<reference key="3">
    <citation type="journal article" date="2004" name="Genome Res.">
        <title>The status, quality, and expansion of the NIH full-length cDNA project: the Mammalian Gene Collection (MGC).</title>
        <authorList>
            <consortium name="The MGC Project Team"/>
        </authorList>
    </citation>
    <scope>NUCLEOTIDE SEQUENCE [LARGE SCALE MRNA] (ISOFORM 1)</scope>
    <source>
        <strain>FVB/N</strain>
        <tissue>Mammary gland</tissue>
    </source>
</reference>
<reference key="4">
    <citation type="journal article" date="1998" name="Nature">
        <title>Histone macroH2A1 is concentrated in the inactive X chromosome of female mammals.</title>
        <authorList>
            <person name="Costanzi C."/>
            <person name="Pehrson J.R."/>
        </authorList>
    </citation>
    <scope>SUBCELLULAR LOCATION</scope>
</reference>
<reference key="5">
    <citation type="journal article" date="2001" name="J. Biol. Chem.">
        <title>MACROH2A2, a new member of the MACROH2A core histone family.</title>
        <authorList>
            <person name="Costanzi C."/>
            <person name="Pehrson J.R."/>
        </authorList>
    </citation>
    <scope>TISSUE SPECIFICITY</scope>
</reference>
<reference key="6">
    <citation type="journal article" date="2004" name="J. Cell Sci.">
        <title>Dynamic relocation of epigenetic chromatin markers reveals an active role of constitutive heterochromatin in the transition from proliferation to quiescence.</title>
        <authorList>
            <person name="Grigoryev S.A."/>
            <person name="Nikitina T."/>
            <person name="Pehrson J.R."/>
            <person name="Singh P.B."/>
            <person name="Woodcock C.L."/>
        </authorList>
    </citation>
    <scope>SUBCELLULAR LOCATION</scope>
</reference>
<reference key="7">
    <citation type="journal article" date="2005" name="Mol. Cell. Biol.">
        <title>Structural characterization of the histone variant macroH2A.</title>
        <authorList>
            <person name="Chakravarthy S."/>
            <person name="Gundimella S.K."/>
            <person name="Caron C."/>
            <person name="Perche P.-Y."/>
            <person name="Pehrson J.R."/>
            <person name="Khochbin S."/>
            <person name="Luger K."/>
        </authorList>
    </citation>
    <scope>INTERACTION WITH HDAC1 AND HDAC2</scope>
    <scope>FUNCTION</scope>
</reference>
<reference key="8">
    <citation type="journal article" date="2009" name="Immunity">
        <title>The phagosomal proteome in interferon-gamma-activated macrophages.</title>
        <authorList>
            <person name="Trost M."/>
            <person name="English L."/>
            <person name="Lemieux S."/>
            <person name="Courcelles M."/>
            <person name="Desjardins M."/>
            <person name="Thibault P."/>
        </authorList>
    </citation>
    <scope>PHOSPHORYLATION [LARGE SCALE ANALYSIS] AT THR-129</scope>
    <scope>IDENTIFICATION BY MASS SPECTROMETRY [LARGE SCALE ANALYSIS]</scope>
</reference>
<reference key="9">
    <citation type="journal article" date="2010" name="Cell">
        <title>A tissue-specific atlas of mouse protein phosphorylation and expression.</title>
        <authorList>
            <person name="Huttlin E.L."/>
            <person name="Jedrychowski M.P."/>
            <person name="Elias J.E."/>
            <person name="Goswami T."/>
            <person name="Rad R."/>
            <person name="Beausoleil S.A."/>
            <person name="Villen J."/>
            <person name="Haas W."/>
            <person name="Sowa M.E."/>
            <person name="Gygi S.P."/>
        </authorList>
    </citation>
    <scope>PHOSPHORYLATION [LARGE SCALE ANALYSIS] AT THR-129; SER-170; SER-173 AND THR-178</scope>
    <scope>IDENTIFICATION BY MASS SPECTROMETRY [LARGE SCALE ANALYSIS]</scope>
    <source>
        <tissue>Brain</tissue>
        <tissue>Brown adipose tissue</tissue>
        <tissue>Kidney</tissue>
        <tissue>Liver</tissue>
        <tissue>Lung</tissue>
        <tissue>Pancreas</tissue>
        <tissue>Spleen</tissue>
        <tissue>Testis</tissue>
    </source>
</reference>
<reference key="10">
    <citation type="journal article" date="2012" name="Nat. Struct. Mol. Biol.">
        <title>Splicing switch of an epigenetic regulator by RNA helicases promotes tumor-cell invasiveness.</title>
        <authorList>
            <person name="Dardenne E."/>
            <person name="Pierredon S."/>
            <person name="Driouch K."/>
            <person name="Gratadou L."/>
            <person name="Lacroix-Triki M."/>
            <person name="Espinoza M.P."/>
            <person name="Zonta E."/>
            <person name="Germann S."/>
            <person name="Mortada H."/>
            <person name="Villemin J.P."/>
            <person name="Dutertre M."/>
            <person name="Lidereau R."/>
            <person name="Vagner S."/>
            <person name="Auboeuf D."/>
        </authorList>
    </citation>
    <scope>FUNCTION (ISOFORMS 1 AND 2)</scope>
    <scope>ALTERNATIVE SPLICING (ISOFORMS 1 AND 2)</scope>
</reference>
<reference key="11">
    <citation type="journal article" date="2013" name="Mol. Cell">
        <title>SIRT5-mediated lysine desuccinylation impacts diverse metabolic pathways.</title>
        <authorList>
            <person name="Park J."/>
            <person name="Chen Y."/>
            <person name="Tishkoff D.X."/>
            <person name="Peng C."/>
            <person name="Tan M."/>
            <person name="Dai L."/>
            <person name="Xie Z."/>
            <person name="Zhang Y."/>
            <person name="Zwaans B.M."/>
            <person name="Skinner M.E."/>
            <person name="Lombard D.B."/>
            <person name="Zhao Y."/>
        </authorList>
    </citation>
    <scope>ACETYLATION [LARGE SCALE ANALYSIS] AT LYS-116 AND LYS-123</scope>
    <scope>IDENTIFICATION BY MASS SPECTROMETRY [LARGE SCALE ANALYSIS]</scope>
    <source>
        <tissue>Embryonic fibroblast</tissue>
    </source>
</reference>
<reference key="12">
    <citation type="journal article" date="2017" name="Nat. Struct. Mol. Biol.">
        <title>MacroH2A1.1 regulates mitochondrial respiration by limiting nuclear NAD+ consumption.</title>
        <authorList>
            <person name="Posavec Marjanovic M."/>
            <person name="Hurtado-Bages S."/>
            <person name="Lassi M."/>
            <person name="Valero V."/>
            <person name="Malinverni R."/>
            <person name="Delage H."/>
            <person name="Navarro M."/>
            <person name="Corujo D."/>
            <person name="Guberovic I."/>
            <person name="Douet J."/>
            <person name="Gama-Perez P."/>
            <person name="Garcia-Roves P.M."/>
            <person name="Ahel I."/>
            <person name="Ladurner A.G."/>
            <person name="Yanes O."/>
            <person name="Bouvet P."/>
            <person name="Suelves M."/>
            <person name="Teperino R."/>
            <person name="Pospisilik J.A."/>
            <person name="Buschbeck M."/>
        </authorList>
    </citation>
    <scope>FUNCTION (ISOFORM 1)</scope>
    <scope>INTERACTION WITH PARP1 (ISOFORM 1)</scope>
    <scope>DOMAIN (ISOFORM 1)</scope>
    <scope>MUTAGENESIS OF GLY-224</scope>
</reference>
<reference key="13">
    <citation type="journal article" date="2021" name="Nat. Struct. Mol. Biol.">
        <title>Evolution of a histone variant involved in compartmental regulation of NAD metabolism.</title>
        <authorList>
            <person name="Guberovic I."/>
            <person name="Hurtado-Bages S."/>
            <person name="Rivera-Casas C."/>
            <person name="Knobloch G."/>
            <person name="Malinverni R."/>
            <person name="Valero V."/>
            <person name="Leger M.M."/>
            <person name="Garcia J."/>
            <person name="Basquin J."/>
            <person name="Gomez de Cedron M."/>
            <person name="Frigole-Vivas M."/>
            <person name="Cheema M.S."/>
            <person name="Perez A."/>
            <person name="Ausio J."/>
            <person name="Ramirez de Molina A."/>
            <person name="Salvatella X."/>
            <person name="Ruiz-Trillo I."/>
            <person name="Eirin-Lopez J.M."/>
            <person name="Ladurner A.G."/>
            <person name="Buschbeck M."/>
        </authorList>
    </citation>
    <scope>FUNCTION (ISOFORM 1)</scope>
    <scope>DOMAIN (ISOFORM 1)</scope>
</reference>